<proteinExistence type="evidence at protein level"/>
<organism>
    <name type="scientific">Drosophila melanogaster</name>
    <name type="common">Fruit fly</name>
    <dbReference type="NCBI Taxonomy" id="7227"/>
    <lineage>
        <taxon>Eukaryota</taxon>
        <taxon>Metazoa</taxon>
        <taxon>Ecdysozoa</taxon>
        <taxon>Arthropoda</taxon>
        <taxon>Hexapoda</taxon>
        <taxon>Insecta</taxon>
        <taxon>Pterygota</taxon>
        <taxon>Neoptera</taxon>
        <taxon>Endopterygota</taxon>
        <taxon>Diptera</taxon>
        <taxon>Brachycera</taxon>
        <taxon>Muscomorpha</taxon>
        <taxon>Ephydroidea</taxon>
        <taxon>Drosophilidae</taxon>
        <taxon>Drosophila</taxon>
        <taxon>Sophophora</taxon>
    </lineage>
</organism>
<evidence type="ECO:0000269" key="1">
    <source>
    </source>
</evidence>
<evidence type="ECO:0000269" key="2">
    <source>
    </source>
</evidence>
<evidence type="ECO:0000269" key="3">
    <source>
    </source>
</evidence>
<evidence type="ECO:0000305" key="4"/>
<reference key="1">
    <citation type="journal article" date="1990" name="Genetics">
        <title>Detailed structure of the Drosophila melanogaster stellate genes and their transcripts.</title>
        <authorList>
            <person name="Livak K.J."/>
        </authorList>
    </citation>
    <scope>NUCLEOTIDE SEQUENCE [GENOMIC DNA]</scope>
    <source>
        <strain>Oregon-R</strain>
        <tissue>Testis</tissue>
    </source>
</reference>
<reference key="2">
    <citation type="journal article" date="2000" name="Science">
        <title>The genome sequence of Drosophila melanogaster.</title>
        <authorList>
            <person name="Adams M.D."/>
            <person name="Celniker S.E."/>
            <person name="Holt R.A."/>
            <person name="Evans C.A."/>
            <person name="Gocayne J.D."/>
            <person name="Amanatides P.G."/>
            <person name="Scherer S.E."/>
            <person name="Li P.W."/>
            <person name="Hoskins R.A."/>
            <person name="Galle R.F."/>
            <person name="George R.A."/>
            <person name="Lewis S.E."/>
            <person name="Richards S."/>
            <person name="Ashburner M."/>
            <person name="Henderson S.N."/>
            <person name="Sutton G.G."/>
            <person name="Wortman J.R."/>
            <person name="Yandell M.D."/>
            <person name="Zhang Q."/>
            <person name="Chen L.X."/>
            <person name="Brandon R.C."/>
            <person name="Rogers Y.-H.C."/>
            <person name="Blazej R.G."/>
            <person name="Champe M."/>
            <person name="Pfeiffer B.D."/>
            <person name="Wan K.H."/>
            <person name="Doyle C."/>
            <person name="Baxter E.G."/>
            <person name="Helt G."/>
            <person name="Nelson C.R."/>
            <person name="Miklos G.L.G."/>
            <person name="Abril J.F."/>
            <person name="Agbayani A."/>
            <person name="An H.-J."/>
            <person name="Andrews-Pfannkoch C."/>
            <person name="Baldwin D."/>
            <person name="Ballew R.M."/>
            <person name="Basu A."/>
            <person name="Baxendale J."/>
            <person name="Bayraktaroglu L."/>
            <person name="Beasley E.M."/>
            <person name="Beeson K.Y."/>
            <person name="Benos P.V."/>
            <person name="Berman B.P."/>
            <person name="Bhandari D."/>
            <person name="Bolshakov S."/>
            <person name="Borkova D."/>
            <person name="Botchan M.R."/>
            <person name="Bouck J."/>
            <person name="Brokstein P."/>
            <person name="Brottier P."/>
            <person name="Burtis K.C."/>
            <person name="Busam D.A."/>
            <person name="Butler H."/>
            <person name="Cadieu E."/>
            <person name="Center A."/>
            <person name="Chandra I."/>
            <person name="Cherry J.M."/>
            <person name="Cawley S."/>
            <person name="Dahlke C."/>
            <person name="Davenport L.B."/>
            <person name="Davies P."/>
            <person name="de Pablos B."/>
            <person name="Delcher A."/>
            <person name="Deng Z."/>
            <person name="Mays A.D."/>
            <person name="Dew I."/>
            <person name="Dietz S.M."/>
            <person name="Dodson K."/>
            <person name="Doup L.E."/>
            <person name="Downes M."/>
            <person name="Dugan-Rocha S."/>
            <person name="Dunkov B.C."/>
            <person name="Dunn P."/>
            <person name="Durbin K.J."/>
            <person name="Evangelista C.C."/>
            <person name="Ferraz C."/>
            <person name="Ferriera S."/>
            <person name="Fleischmann W."/>
            <person name="Fosler C."/>
            <person name="Gabrielian A.E."/>
            <person name="Garg N.S."/>
            <person name="Gelbart W.M."/>
            <person name="Glasser K."/>
            <person name="Glodek A."/>
            <person name="Gong F."/>
            <person name="Gorrell J.H."/>
            <person name="Gu Z."/>
            <person name="Guan P."/>
            <person name="Harris M."/>
            <person name="Harris N.L."/>
            <person name="Harvey D.A."/>
            <person name="Heiman T.J."/>
            <person name="Hernandez J.R."/>
            <person name="Houck J."/>
            <person name="Hostin D."/>
            <person name="Houston K.A."/>
            <person name="Howland T.J."/>
            <person name="Wei M.-H."/>
            <person name="Ibegwam C."/>
            <person name="Jalali M."/>
            <person name="Kalush F."/>
            <person name="Karpen G.H."/>
            <person name="Ke Z."/>
            <person name="Kennison J.A."/>
            <person name="Ketchum K.A."/>
            <person name="Kimmel B.E."/>
            <person name="Kodira C.D."/>
            <person name="Kraft C.L."/>
            <person name="Kravitz S."/>
            <person name="Kulp D."/>
            <person name="Lai Z."/>
            <person name="Lasko P."/>
            <person name="Lei Y."/>
            <person name="Levitsky A.A."/>
            <person name="Li J.H."/>
            <person name="Li Z."/>
            <person name="Liang Y."/>
            <person name="Lin X."/>
            <person name="Liu X."/>
            <person name="Mattei B."/>
            <person name="McIntosh T.C."/>
            <person name="McLeod M.P."/>
            <person name="McPherson D."/>
            <person name="Merkulov G."/>
            <person name="Milshina N.V."/>
            <person name="Mobarry C."/>
            <person name="Morris J."/>
            <person name="Moshrefi A."/>
            <person name="Mount S.M."/>
            <person name="Moy M."/>
            <person name="Murphy B."/>
            <person name="Murphy L."/>
            <person name="Muzny D.M."/>
            <person name="Nelson D.L."/>
            <person name="Nelson D.R."/>
            <person name="Nelson K.A."/>
            <person name="Nixon K."/>
            <person name="Nusskern D.R."/>
            <person name="Pacleb J.M."/>
            <person name="Palazzolo M."/>
            <person name="Pittman G.S."/>
            <person name="Pan S."/>
            <person name="Pollard J."/>
            <person name="Puri V."/>
            <person name="Reese M.G."/>
            <person name="Reinert K."/>
            <person name="Remington K."/>
            <person name="Saunders R.D.C."/>
            <person name="Scheeler F."/>
            <person name="Shen H."/>
            <person name="Shue B.C."/>
            <person name="Siden-Kiamos I."/>
            <person name="Simpson M."/>
            <person name="Skupski M.P."/>
            <person name="Smith T.J."/>
            <person name="Spier E."/>
            <person name="Spradling A.C."/>
            <person name="Stapleton M."/>
            <person name="Strong R."/>
            <person name="Sun E."/>
            <person name="Svirskas R."/>
            <person name="Tector C."/>
            <person name="Turner R."/>
            <person name="Venter E."/>
            <person name="Wang A.H."/>
            <person name="Wang X."/>
            <person name="Wang Z.-Y."/>
            <person name="Wassarman D.A."/>
            <person name="Weinstock G.M."/>
            <person name="Weissenbach J."/>
            <person name="Williams S.M."/>
            <person name="Woodage T."/>
            <person name="Worley K.C."/>
            <person name="Wu D."/>
            <person name="Yang S."/>
            <person name="Yao Q.A."/>
            <person name="Ye J."/>
            <person name="Yeh R.-F."/>
            <person name="Zaveri J.S."/>
            <person name="Zhan M."/>
            <person name="Zhang G."/>
            <person name="Zhao Q."/>
            <person name="Zheng L."/>
            <person name="Zheng X.H."/>
            <person name="Zhong F.N."/>
            <person name="Zhong W."/>
            <person name="Zhou X."/>
            <person name="Zhu S.C."/>
            <person name="Zhu X."/>
            <person name="Smith H.O."/>
            <person name="Gibbs R.A."/>
            <person name="Myers E.W."/>
            <person name="Rubin G.M."/>
            <person name="Venter J.C."/>
        </authorList>
    </citation>
    <scope>NUCLEOTIDE SEQUENCE [LARGE SCALE GENOMIC DNA] (STE:CG33236; STE:CG33240; STE:CG33244 AND STE:CG33245)</scope>
    <source>
        <strain>Berkeley</strain>
    </source>
</reference>
<reference key="3">
    <citation type="journal article" date="2002" name="Genome Biol.">
        <title>Annotation of the Drosophila melanogaster euchromatic genome: a systematic review.</title>
        <authorList>
            <person name="Misra S."/>
            <person name="Crosby M.A."/>
            <person name="Mungall C.J."/>
            <person name="Matthews B.B."/>
            <person name="Campbell K.S."/>
            <person name="Hradecky P."/>
            <person name="Huang Y."/>
            <person name="Kaminker J.S."/>
            <person name="Millburn G.H."/>
            <person name="Prochnik S.E."/>
            <person name="Smith C.D."/>
            <person name="Tupy J.L."/>
            <person name="Whitfield E.J."/>
            <person name="Bayraktaroglu L."/>
            <person name="Berman B.P."/>
            <person name="Bettencourt B.R."/>
            <person name="Celniker S.E."/>
            <person name="de Grey A.D.N.J."/>
            <person name="Drysdale R.A."/>
            <person name="Harris N.L."/>
            <person name="Richter J."/>
            <person name="Russo S."/>
            <person name="Schroeder A.J."/>
            <person name="Shu S.Q."/>
            <person name="Stapleton M."/>
            <person name="Yamada C."/>
            <person name="Ashburner M."/>
            <person name="Gelbart W.M."/>
            <person name="Rubin G.M."/>
            <person name="Lewis S.E."/>
        </authorList>
    </citation>
    <scope>GENOME REANNOTATION</scope>
    <source>
        <strain>Berkeley</strain>
    </source>
</reference>
<reference key="4">
    <citation type="journal article" date="1995" name="Proc. Natl. Acad. Sci. U.S.A.">
        <title>The Ste locus, a component of the parasitic cry-Ste system of Drosophila melanogaster, encodes a protein that forms crystals in primary spermatocytes and mimics properties of the beta subunit of casein kinase 2.</title>
        <authorList>
            <person name="Bozzetti M.P."/>
            <person name="Massari S."/>
            <person name="Finelli P."/>
            <person name="Meggio F."/>
            <person name="Pinna L.A."/>
            <person name="Boldyreff B."/>
            <person name="Issinger O.G."/>
            <person name="Palumbo G."/>
            <person name="Ciriaco C."/>
            <person name="Bonaccorsi S."/>
            <person name="Pimpinelli S."/>
        </authorList>
    </citation>
    <scope>TISSUE SPECIFICITY</scope>
    <scope>INTERACTION WITH CKII-ALPHA</scope>
</reference>
<reference key="5">
    <citation type="journal article" date="2001" name="Chromosoma">
        <title>A role of the Drosophila homeless gene in repression of Stellate in male meiosis.</title>
        <authorList>
            <person name="Stapleton W."/>
            <person name="Das S."/>
            <person name="McKee B.D."/>
        </authorList>
    </citation>
    <scope>INDUCTION</scope>
</reference>
<reference key="6">
    <citation type="journal article" date="2001" name="Curr. Biol.">
        <title>Double-stranded RNA-mediated silencing of genomic tandem repeats and transposable elements in the D. melanogaster germline.</title>
        <authorList>
            <person name="Aravin A.A."/>
            <person name="Naumova N.M."/>
            <person name="Tulin A.V."/>
            <person name="Vagin V.V."/>
            <person name="Rozovsky Y.M."/>
            <person name="Gvozdev V.A."/>
        </authorList>
    </citation>
    <scope>INDUCTION</scope>
</reference>
<accession>Q7KV12</accession>
<accession>P15021</accession>
<accession>Q7KV16</accession>
<feature type="chain" id="PRO_0000068259" description="Stellate protein CG33236/CG33240/CG33244/CG33245">
    <location>
        <begin position="1"/>
        <end position="172"/>
    </location>
</feature>
<feature type="sequence conflict" description="In Ref. 1; CAA33906." evidence="4" ref="1">
    <original>M</original>
    <variation>L</variation>
    <location>
        <position position="159"/>
    </location>
</feature>
<keyword id="KW-1185">Reference proteome</keyword>
<gene>
    <name type="primary">Ste:CG33236</name>
    <name type="ORF">CG33236</name>
</gene>
<gene>
    <name type="primary">Ste:CG33240</name>
    <name type="ORF">CG33240</name>
</gene>
<gene>
    <name type="primary">Ste:CG33244</name>
    <name type="ORF">CG33244</name>
</gene>
<gene>
    <name type="primary">Ste:CG33245</name>
    <name type="ORF">CG33245</name>
</gene>
<dbReference type="EMBL" id="X15899">
    <property type="protein sequence ID" value="CAA33906.1"/>
    <property type="molecule type" value="Genomic_DNA"/>
</dbReference>
<dbReference type="EMBL" id="AE014298">
    <property type="protein sequence ID" value="AAS65329.2"/>
    <property type="molecule type" value="Genomic_DNA"/>
</dbReference>
<dbReference type="EMBL" id="AE014298">
    <property type="protein sequence ID" value="AAS65330.2"/>
    <property type="molecule type" value="Genomic_DNA"/>
</dbReference>
<dbReference type="EMBL" id="AE014298">
    <property type="protein sequence ID" value="AAS65334.2"/>
    <property type="molecule type" value="Genomic_DNA"/>
</dbReference>
<dbReference type="EMBL" id="AE014298">
    <property type="protein sequence ID" value="AAS65338.2"/>
    <property type="molecule type" value="Genomic_DNA"/>
</dbReference>
<dbReference type="PIR" id="S24397">
    <property type="entry name" value="S24397"/>
</dbReference>
<dbReference type="RefSeq" id="NP_996423.2">
    <property type="nucleotide sequence ID" value="NM_206700.2"/>
</dbReference>
<dbReference type="RefSeq" id="NP_996424.2">
    <property type="nucleotide sequence ID" value="NM_206701.2"/>
</dbReference>
<dbReference type="RefSeq" id="NP_996428.2">
    <property type="nucleotide sequence ID" value="NM_206705.2"/>
</dbReference>
<dbReference type="RefSeq" id="NP_996432.2">
    <property type="nucleotide sequence ID" value="NM_206709.3"/>
</dbReference>
<dbReference type="SMR" id="Q7KV12"/>
<dbReference type="FunCoup" id="Q7KV12">
    <property type="interactions" value="168"/>
</dbReference>
<dbReference type="STRING" id="7227.FBpp0289362"/>
<dbReference type="PaxDb" id="7227-FBpp0289362"/>
<dbReference type="EnsemblMetazoa" id="FBtr0300085">
    <property type="protein sequence ID" value="FBpp0289362"/>
    <property type="gene ID" value="FBgn0053236"/>
</dbReference>
<dbReference type="EnsemblMetazoa" id="FBtr0300089">
    <property type="protein sequence ID" value="FBpp0289366"/>
    <property type="gene ID" value="FBgn0053240"/>
</dbReference>
<dbReference type="EnsemblMetazoa" id="FBtr0300093">
    <property type="protein sequence ID" value="FBpp0289370"/>
    <property type="gene ID" value="FBgn0053244"/>
</dbReference>
<dbReference type="EnsemblMetazoa" id="FBtr0300094">
    <property type="protein sequence ID" value="FBpp0289371"/>
    <property type="gene ID" value="FBgn0053245"/>
</dbReference>
<dbReference type="GeneID" id="2768873"/>
<dbReference type="GeneID" id="2768896"/>
<dbReference type="GeneID" id="2768900"/>
<dbReference type="GeneID" id="2768906"/>
<dbReference type="KEGG" id="dme:Dmel_CG33236"/>
<dbReference type="KEGG" id="dme:Dmel_CG33240"/>
<dbReference type="KEGG" id="dme:Dmel_CG33244"/>
<dbReference type="KEGG" id="dme:Dmel_CG33245"/>
<dbReference type="UCSC" id="CG33236-RB">
    <property type="organism name" value="d. melanogaster"/>
</dbReference>
<dbReference type="AGR" id="FB:FBgn0003523"/>
<dbReference type="AGR" id="FB:FBgn0053236"/>
<dbReference type="AGR" id="FB:FBgn0053240"/>
<dbReference type="AGR" id="FB:FBgn0053244"/>
<dbReference type="AGR" id="FB:FBgn0053245"/>
<dbReference type="CTD" id="2768873"/>
<dbReference type="CTD" id="2768896"/>
<dbReference type="CTD" id="2768900"/>
<dbReference type="CTD" id="2768906"/>
<dbReference type="FlyBase" id="FBgn0053236">
    <property type="gene designation" value="Ste:CG33236"/>
</dbReference>
<dbReference type="FlyBase" id="FBgn0053240">
    <property type="gene designation" value="Ste:CG33240"/>
</dbReference>
<dbReference type="FlyBase" id="FBgn0053244">
    <property type="gene designation" value="Ste:CG33244"/>
</dbReference>
<dbReference type="FlyBase" id="FBgn0053245">
    <property type="gene designation" value="Ste:CG33245"/>
</dbReference>
<dbReference type="VEuPathDB" id="VectorBase:FBgn0053236"/>
<dbReference type="VEuPathDB" id="VectorBase:FBgn0053240"/>
<dbReference type="VEuPathDB" id="VectorBase:FBgn0053244"/>
<dbReference type="VEuPathDB" id="VectorBase:FBgn0053245"/>
<dbReference type="eggNOG" id="KOG3092">
    <property type="taxonomic scope" value="Eukaryota"/>
</dbReference>
<dbReference type="GeneTree" id="ENSGT00390000003781"/>
<dbReference type="HOGENOM" id="CLU_034027_3_3_1"/>
<dbReference type="InParanoid" id="Q7KV12"/>
<dbReference type="OrthoDB" id="3971593at2759"/>
<dbReference type="PhylomeDB" id="Q7KV12"/>
<dbReference type="BioGRID-ORCS" id="2768900">
    <property type="hits" value="0 hits in 1 CRISPR screen"/>
</dbReference>
<dbReference type="PRO" id="PR:Q7KV12"/>
<dbReference type="Proteomes" id="UP000000803">
    <property type="component" value="Chromosome X"/>
</dbReference>
<dbReference type="Bgee" id="FBgn0053236">
    <property type="expression patterns" value="Expressed in male reproductive gland"/>
</dbReference>
<dbReference type="ExpressionAtlas" id="Q7KV12">
    <property type="expression patterns" value="baseline"/>
</dbReference>
<dbReference type="GO" id="GO:0005737">
    <property type="term" value="C:cytoplasm"/>
    <property type="evidence" value="ECO:0000314"/>
    <property type="project" value="FlyBase"/>
</dbReference>
<dbReference type="GO" id="GO:0005634">
    <property type="term" value="C:nucleus"/>
    <property type="evidence" value="ECO:0000314"/>
    <property type="project" value="FlyBase"/>
</dbReference>
<dbReference type="GO" id="GO:0005956">
    <property type="term" value="C:protein kinase CK2 complex"/>
    <property type="evidence" value="ECO:0000314"/>
    <property type="project" value="FlyBase"/>
</dbReference>
<dbReference type="GO" id="GO:0019887">
    <property type="term" value="F:protein kinase regulator activity"/>
    <property type="evidence" value="ECO:0000315"/>
    <property type="project" value="FlyBase"/>
</dbReference>
<dbReference type="FunFam" id="1.10.1820.10:FF:000005">
    <property type="entry name" value="Casein kinase II subunit beta"/>
    <property type="match status" value="1"/>
</dbReference>
<dbReference type="FunFam" id="2.20.25.20:FF:000001">
    <property type="entry name" value="Casein kinase II subunit beta"/>
    <property type="match status" value="1"/>
</dbReference>
<dbReference type="Gene3D" id="2.20.25.20">
    <property type="match status" value="1"/>
</dbReference>
<dbReference type="Gene3D" id="1.10.1820.10">
    <property type="entry name" value="protein kinase ck2 holoenzyme, chain C, domain 1"/>
    <property type="match status" value="1"/>
</dbReference>
<dbReference type="InterPro" id="IPR016149">
    <property type="entry name" value="Casein_kin_II_reg-sub_N"/>
</dbReference>
<dbReference type="InterPro" id="IPR035991">
    <property type="entry name" value="Casein_kinase_II_beta-like"/>
</dbReference>
<dbReference type="InterPro" id="IPR000704">
    <property type="entry name" value="Casein_kinase_II_reg-sub"/>
</dbReference>
<dbReference type="PANTHER" id="PTHR11740">
    <property type="entry name" value="CASEIN KINASE II SUBUNIT BETA"/>
    <property type="match status" value="1"/>
</dbReference>
<dbReference type="PANTHER" id="PTHR11740:SF0">
    <property type="entry name" value="CASEIN KINASE II SUBUNIT BETA"/>
    <property type="match status" value="1"/>
</dbReference>
<dbReference type="Pfam" id="PF01214">
    <property type="entry name" value="CK_II_beta"/>
    <property type="match status" value="1"/>
</dbReference>
<dbReference type="PRINTS" id="PR00472">
    <property type="entry name" value="CASNKINASEII"/>
</dbReference>
<dbReference type="SMART" id="SM01085">
    <property type="entry name" value="CK_II_beta"/>
    <property type="match status" value="1"/>
</dbReference>
<dbReference type="SUPFAM" id="SSF57798">
    <property type="entry name" value="Casein kinase II beta subunit"/>
    <property type="match status" value="1"/>
</dbReference>
<dbReference type="PROSITE" id="PS01101">
    <property type="entry name" value="CK2_BETA"/>
    <property type="match status" value="1"/>
</dbReference>
<sequence length="172" mass="19525">MSSSQNNNSSWIDWFLGIKGNQFLCRVPTDYVQDTFNQMGLEYFSEILDVILKPVIDSSSGLLYGDEKKWYGMIHARYIRSERGLIAMHRKYLRGDFGSCPNISCDRQNTLPVGLSAVWGKSTVKIHCPRCKSNFHPKSDTQLDGAMFGPSFPDIFFSMLPNLTSPLDDPRT</sequence>
<comment type="function">
    <text>Unknown. In males lacking the Y chromosome, its strong overexpression leads to the appearance of proteinaceous star-shaped crystals in the primary spermatocytes causing meiotic drive, possibly by interfering with normal casein kinase 2 activity.</text>
</comment>
<comment type="subunit">
    <text evidence="3">Interacts in vitro with the casein kinase 2 alpha subunit (CkII-alpha). The relevance of such interaction is however unclear in vivo.</text>
</comment>
<comment type="tissue specificity">
    <text evidence="3">Probably not expressed in wild-type flies. In males lacking the Y chromosome, it is testis-specific and constitutes the main component of star-shaped crystals.</text>
</comment>
<comment type="induction">
    <text evidence="1 2">In wild-type flies, it is strongly down-regulated by double-stranded RNA (dsRNA) interference mediated by Su(Ste) transcripts. In males lacking the Y chromosome, the absence of Su(Ste) locus, relieves such down-regulation, explaining why it is strongly expressed.</text>
</comment>
<comment type="miscellaneous">
    <text>There are multiple copies of the stellate gene in fruit fly, encoding proteins that are extremely similar, which makes their individual characterization difficult. Thus, most experiments probably do not discriminate between the different members.</text>
</comment>
<comment type="similarity">
    <text evidence="4">Belongs to the casein kinase 2 subunit beta family.</text>
</comment>
<protein>
    <recommendedName>
        <fullName>Stellate protein CG33236/CG33240/CG33244/CG33245</fullName>
    </recommendedName>
</protein>
<name>STEL1_DROME</name>